<keyword id="KW-0066">ATP synthesis</keyword>
<keyword id="KW-0997">Cell inner membrane</keyword>
<keyword id="KW-1003">Cell membrane</keyword>
<keyword id="KW-0138">CF(0)</keyword>
<keyword id="KW-0375">Hydrogen ion transport</keyword>
<keyword id="KW-0406">Ion transport</keyword>
<keyword id="KW-0472">Membrane</keyword>
<keyword id="KW-1185">Reference proteome</keyword>
<keyword id="KW-0812">Transmembrane</keyword>
<keyword id="KW-1133">Transmembrane helix</keyword>
<keyword id="KW-0813">Transport</keyword>
<dbReference type="EMBL" id="CP000697">
    <property type="protein sequence ID" value="ABQ29622.1"/>
    <property type="molecule type" value="Genomic_DNA"/>
</dbReference>
<dbReference type="RefSeq" id="WP_007422332.1">
    <property type="nucleotide sequence ID" value="NC_009484.1"/>
</dbReference>
<dbReference type="SMR" id="A5FVJ0"/>
<dbReference type="STRING" id="349163.Acry_0397"/>
<dbReference type="KEGG" id="acr:Acry_0397"/>
<dbReference type="eggNOG" id="COG0356">
    <property type="taxonomic scope" value="Bacteria"/>
</dbReference>
<dbReference type="HOGENOM" id="CLU_041018_0_2_5"/>
<dbReference type="Proteomes" id="UP000000245">
    <property type="component" value="Chromosome"/>
</dbReference>
<dbReference type="GO" id="GO:0005886">
    <property type="term" value="C:plasma membrane"/>
    <property type="evidence" value="ECO:0007669"/>
    <property type="project" value="UniProtKB-SubCell"/>
</dbReference>
<dbReference type="GO" id="GO:0045259">
    <property type="term" value="C:proton-transporting ATP synthase complex"/>
    <property type="evidence" value="ECO:0007669"/>
    <property type="project" value="UniProtKB-KW"/>
</dbReference>
<dbReference type="GO" id="GO:0046933">
    <property type="term" value="F:proton-transporting ATP synthase activity, rotational mechanism"/>
    <property type="evidence" value="ECO:0007669"/>
    <property type="project" value="UniProtKB-UniRule"/>
</dbReference>
<dbReference type="CDD" id="cd00310">
    <property type="entry name" value="ATP-synt_Fo_a_6"/>
    <property type="match status" value="1"/>
</dbReference>
<dbReference type="Gene3D" id="1.20.120.220">
    <property type="entry name" value="ATP synthase, F0 complex, subunit A"/>
    <property type="match status" value="1"/>
</dbReference>
<dbReference type="HAMAP" id="MF_01393">
    <property type="entry name" value="ATP_synth_a_bact"/>
    <property type="match status" value="1"/>
</dbReference>
<dbReference type="InterPro" id="IPR000568">
    <property type="entry name" value="ATP_synth_F0_asu"/>
</dbReference>
<dbReference type="InterPro" id="IPR023011">
    <property type="entry name" value="ATP_synth_F0_asu_AS"/>
</dbReference>
<dbReference type="InterPro" id="IPR045083">
    <property type="entry name" value="ATP_synth_F0_asu_bact/mt"/>
</dbReference>
<dbReference type="InterPro" id="IPR035908">
    <property type="entry name" value="F0_ATP_A_sf"/>
</dbReference>
<dbReference type="NCBIfam" id="TIGR01131">
    <property type="entry name" value="ATP_synt_6_or_A"/>
    <property type="match status" value="1"/>
</dbReference>
<dbReference type="NCBIfam" id="NF004482">
    <property type="entry name" value="PRK05815.2-4"/>
    <property type="match status" value="1"/>
</dbReference>
<dbReference type="PANTHER" id="PTHR11410">
    <property type="entry name" value="ATP SYNTHASE SUBUNIT A"/>
    <property type="match status" value="1"/>
</dbReference>
<dbReference type="PANTHER" id="PTHR11410:SF0">
    <property type="entry name" value="ATP SYNTHASE SUBUNIT A"/>
    <property type="match status" value="1"/>
</dbReference>
<dbReference type="Pfam" id="PF00119">
    <property type="entry name" value="ATP-synt_A"/>
    <property type="match status" value="1"/>
</dbReference>
<dbReference type="PRINTS" id="PR00123">
    <property type="entry name" value="ATPASEA"/>
</dbReference>
<dbReference type="SUPFAM" id="SSF81336">
    <property type="entry name" value="F1F0 ATP synthase subunit A"/>
    <property type="match status" value="1"/>
</dbReference>
<dbReference type="PROSITE" id="PS00449">
    <property type="entry name" value="ATPASE_A"/>
    <property type="match status" value="1"/>
</dbReference>
<feature type="chain" id="PRO_0000362216" description="ATP synthase subunit a">
    <location>
        <begin position="1"/>
        <end position="251"/>
    </location>
</feature>
<feature type="transmembrane region" description="Helical" evidence="1">
    <location>
        <begin position="30"/>
        <end position="50"/>
    </location>
</feature>
<feature type="transmembrane region" description="Helical" evidence="1">
    <location>
        <begin position="86"/>
        <end position="106"/>
    </location>
</feature>
<feature type="transmembrane region" description="Helical" evidence="1">
    <location>
        <begin position="116"/>
        <end position="136"/>
    </location>
</feature>
<feature type="transmembrane region" description="Helical" evidence="1">
    <location>
        <begin position="145"/>
        <end position="165"/>
    </location>
</feature>
<feature type="transmembrane region" description="Helical" evidence="1">
    <location>
        <begin position="195"/>
        <end position="215"/>
    </location>
</feature>
<feature type="transmembrane region" description="Helical" evidence="1">
    <location>
        <begin position="219"/>
        <end position="239"/>
    </location>
</feature>
<proteinExistence type="inferred from homology"/>
<evidence type="ECO:0000255" key="1">
    <source>
        <dbReference type="HAMAP-Rule" id="MF_01393"/>
    </source>
</evidence>
<accession>A5FVJ0</accession>
<reference key="1">
    <citation type="submission" date="2007-05" db="EMBL/GenBank/DDBJ databases">
        <title>Complete sequence of chromosome of Acidiphilium cryptum JF-5.</title>
        <authorList>
            <consortium name="US DOE Joint Genome Institute"/>
            <person name="Copeland A."/>
            <person name="Lucas S."/>
            <person name="Lapidus A."/>
            <person name="Barry K."/>
            <person name="Detter J.C."/>
            <person name="Glavina del Rio T."/>
            <person name="Hammon N."/>
            <person name="Israni S."/>
            <person name="Dalin E."/>
            <person name="Tice H."/>
            <person name="Pitluck S."/>
            <person name="Sims D."/>
            <person name="Brettin T."/>
            <person name="Bruce D."/>
            <person name="Han C."/>
            <person name="Schmutz J."/>
            <person name="Larimer F."/>
            <person name="Land M."/>
            <person name="Hauser L."/>
            <person name="Kyrpides N."/>
            <person name="Kim E."/>
            <person name="Magnuson T."/>
            <person name="Richardson P."/>
        </authorList>
    </citation>
    <scope>NUCLEOTIDE SEQUENCE [LARGE SCALE GENOMIC DNA]</scope>
    <source>
        <strain>JF-5</strain>
    </source>
</reference>
<protein>
    <recommendedName>
        <fullName evidence="1">ATP synthase subunit a</fullName>
    </recommendedName>
    <alternativeName>
        <fullName evidence="1">ATP synthase F0 sector subunit a</fullName>
    </alternativeName>
    <alternativeName>
        <fullName evidence="1">F-ATPase subunit 6</fullName>
    </alternativeName>
</protein>
<name>ATP6_ACICJ</name>
<gene>
    <name evidence="1" type="primary">atpB</name>
    <name type="ordered locus">Acry_0397</name>
</gene>
<comment type="function">
    <text evidence="1">Key component of the proton channel; it plays a direct role in the translocation of protons across the membrane.</text>
</comment>
<comment type="subunit">
    <text evidence="1">F-type ATPases have 2 components, CF(1) - the catalytic core - and CF(0) - the membrane proton channel. CF(1) has five subunits: alpha(3), beta(3), gamma(1), delta(1), epsilon(1). CF(0) has three main subunits: a(1), b(2) and c(9-12). The alpha and beta chains form an alternating ring which encloses part of the gamma chain. CF(1) is attached to CF(0) by a central stalk formed by the gamma and epsilon chains, while a peripheral stalk is formed by the delta and b chains.</text>
</comment>
<comment type="subcellular location">
    <subcellularLocation>
        <location evidence="1">Cell inner membrane</location>
        <topology evidence="1">Multi-pass membrane protein</topology>
    </subcellularLocation>
</comment>
<comment type="similarity">
    <text evidence="1">Belongs to the ATPase A chain family.</text>
</comment>
<sequence length="251" mass="27421">MAQESGINALGQFQLTTGFGAFGKAIEFTNSNEMMLLAAVIVTSLFVVALRQRALVPGRMQGLAEISYEFVHNMVLDTIGEEGKRFFPFVFTLFAFILIGNILGLFPYFFAFTSHIAITGALALFVFALSTLVGFWYHGIGFLKFFSPPGVPGWLLPLLIPIEIVSFLSRPISLSVRLFANITAGHVMWEVFAGFMLMLVSGLGAVGVVAAIIPLGLNIALTALEFLVAFLQAYVFAILTCLYLHDAIHMH</sequence>
<organism>
    <name type="scientific">Acidiphilium cryptum (strain JF-5)</name>
    <dbReference type="NCBI Taxonomy" id="349163"/>
    <lineage>
        <taxon>Bacteria</taxon>
        <taxon>Pseudomonadati</taxon>
        <taxon>Pseudomonadota</taxon>
        <taxon>Alphaproteobacteria</taxon>
        <taxon>Acetobacterales</taxon>
        <taxon>Acidocellaceae</taxon>
        <taxon>Acidiphilium</taxon>
    </lineage>
</organism>